<reference key="1">
    <citation type="journal article" date="2001" name="Nature">
        <title>Genome sequence of enterohaemorrhagic Escherichia coli O157:H7.</title>
        <authorList>
            <person name="Perna N.T."/>
            <person name="Plunkett G. III"/>
            <person name="Burland V."/>
            <person name="Mau B."/>
            <person name="Glasner J.D."/>
            <person name="Rose D.J."/>
            <person name="Mayhew G.F."/>
            <person name="Evans P.S."/>
            <person name="Gregor J."/>
            <person name="Kirkpatrick H.A."/>
            <person name="Posfai G."/>
            <person name="Hackett J."/>
            <person name="Klink S."/>
            <person name="Boutin A."/>
            <person name="Shao Y."/>
            <person name="Miller L."/>
            <person name="Grotbeck E.J."/>
            <person name="Davis N.W."/>
            <person name="Lim A."/>
            <person name="Dimalanta E.T."/>
            <person name="Potamousis K."/>
            <person name="Apodaca J."/>
            <person name="Anantharaman T.S."/>
            <person name="Lin J."/>
            <person name="Yen G."/>
            <person name="Schwartz D.C."/>
            <person name="Welch R.A."/>
            <person name="Blattner F.R."/>
        </authorList>
    </citation>
    <scope>NUCLEOTIDE SEQUENCE [LARGE SCALE GENOMIC DNA]</scope>
    <source>
        <strain>O157:H7 / EDL933 / ATCC 700927 / EHEC</strain>
    </source>
</reference>
<reference key="2">
    <citation type="journal article" date="2001" name="DNA Res.">
        <title>Complete genome sequence of enterohemorrhagic Escherichia coli O157:H7 and genomic comparison with a laboratory strain K-12.</title>
        <authorList>
            <person name="Hayashi T."/>
            <person name="Makino K."/>
            <person name="Ohnishi M."/>
            <person name="Kurokawa K."/>
            <person name="Ishii K."/>
            <person name="Yokoyama K."/>
            <person name="Han C.-G."/>
            <person name="Ohtsubo E."/>
            <person name="Nakayama K."/>
            <person name="Murata T."/>
            <person name="Tanaka M."/>
            <person name="Tobe T."/>
            <person name="Iida T."/>
            <person name="Takami H."/>
            <person name="Honda T."/>
            <person name="Sasakawa C."/>
            <person name="Ogasawara N."/>
            <person name="Yasunaga T."/>
            <person name="Kuhara S."/>
            <person name="Shiba T."/>
            <person name="Hattori M."/>
            <person name="Shinagawa H."/>
        </authorList>
    </citation>
    <scope>NUCLEOTIDE SEQUENCE [LARGE SCALE GENOMIC DNA]</scope>
    <source>
        <strain>O157:H7 / Sakai / RIMD 0509952 / EHEC</strain>
    </source>
</reference>
<accession>P0AF07</accession>
<accession>P09349</accession>
<sequence length="308" mass="34186">MKNQAHPIIVVKRRKAKSHGAAHGSWKIAYADFMTAMMAFFLVMWLISISSPKELIQIAEYFRTPLATAVTGGDRISNSESPIPGGGDDYTQSQGEVNKQPNIEELKKRMEQSRLRKLRGDLDQLIESDPKLRALRPHLKIDLVQEGLRIQIIDSQNRPMFRTGSADVEPYMRDILRAIAPVLNGIPNRISLSGHTDDFPYASGEKGYSNWELSADRANASRRELMVGGLDSGKVLRVVGMAATMRLSDRGPDDAVNRRISLLVLNKQAEQAILHENAESQNEPVSALEKPEVAPQVSVPTMPSAEPR</sequence>
<keyword id="KW-0997">Cell inner membrane</keyword>
<keyword id="KW-1003">Cell membrane</keyword>
<keyword id="KW-0145">Chemotaxis</keyword>
<keyword id="KW-0283">Flagellar rotation</keyword>
<keyword id="KW-0472">Membrane</keyword>
<keyword id="KW-1185">Reference proteome</keyword>
<keyword id="KW-0735">Signal-anchor</keyword>
<keyword id="KW-0812">Transmembrane</keyword>
<keyword id="KW-1133">Transmembrane helix</keyword>
<comment type="function">
    <text evidence="1">MotA and MotB comprise the stator element of the flagellar motor complex. Required for the rotation of the flagellar motor. Might be a linker that fastens the torque-generating machinery to the cell wall (By similarity).</text>
</comment>
<comment type="subunit">
    <text evidence="1">Each stator complex is composed of 4 MotA and 2 MotB subunits. 2 A subunits and 1 B subunit are thought to form a single ion channel, so that each stator complex contains two channels (By similarity).</text>
</comment>
<comment type="subcellular location">
    <subcellularLocation>
        <location evidence="1">Cell inner membrane</location>
        <topology evidence="5">Single-pass type II membrane protein</topology>
    </subcellularLocation>
</comment>
<comment type="similarity">
    <text evidence="5">Belongs to the MotB family.</text>
</comment>
<protein>
    <recommendedName>
        <fullName>Motility protein B</fullName>
    </recommendedName>
    <alternativeName>
        <fullName>Chemotaxis protein MotB</fullName>
    </alternativeName>
</protein>
<feature type="chain" id="PRO_0000189586" description="Motility protein B">
    <location>
        <begin position="1"/>
        <end position="308"/>
    </location>
</feature>
<feature type="topological domain" description="Cytoplasmic" evidence="2">
    <location>
        <begin position="1"/>
        <end position="27"/>
    </location>
</feature>
<feature type="transmembrane region" description="Helical; Signal-anchor for type II membrane protein" evidence="2">
    <location>
        <begin position="28"/>
        <end position="49"/>
    </location>
</feature>
<feature type="topological domain" description="Periplasmic" evidence="2">
    <location>
        <begin position="50"/>
        <end position="308"/>
    </location>
</feature>
<feature type="domain" description="OmpA-like" evidence="3">
    <location>
        <begin position="148"/>
        <end position="268"/>
    </location>
</feature>
<feature type="region of interest" description="Disordered" evidence="4">
    <location>
        <begin position="73"/>
        <end position="101"/>
    </location>
</feature>
<feature type="region of interest" description="Disordered" evidence="4">
    <location>
        <begin position="277"/>
        <end position="308"/>
    </location>
</feature>
<feature type="compositionally biased region" description="Polar residues" evidence="4">
    <location>
        <begin position="90"/>
        <end position="101"/>
    </location>
</feature>
<organism>
    <name type="scientific">Escherichia coli O157:H7</name>
    <dbReference type="NCBI Taxonomy" id="83334"/>
    <lineage>
        <taxon>Bacteria</taxon>
        <taxon>Pseudomonadati</taxon>
        <taxon>Pseudomonadota</taxon>
        <taxon>Gammaproteobacteria</taxon>
        <taxon>Enterobacterales</taxon>
        <taxon>Enterobacteriaceae</taxon>
        <taxon>Escherichia</taxon>
    </lineage>
</organism>
<dbReference type="EMBL" id="AE005174">
    <property type="protein sequence ID" value="AAG56879.1"/>
    <property type="molecule type" value="Genomic_DNA"/>
</dbReference>
<dbReference type="EMBL" id="BA000007">
    <property type="protein sequence ID" value="BAB36022.1"/>
    <property type="molecule type" value="Genomic_DNA"/>
</dbReference>
<dbReference type="PIR" id="C85802">
    <property type="entry name" value="C85802"/>
</dbReference>
<dbReference type="PIR" id="G90953">
    <property type="entry name" value="G90953"/>
</dbReference>
<dbReference type="RefSeq" id="NP_310626.1">
    <property type="nucleotide sequence ID" value="NC_002695.1"/>
</dbReference>
<dbReference type="RefSeq" id="WP_000795630.1">
    <property type="nucleotide sequence ID" value="NZ_VOAI01000010.1"/>
</dbReference>
<dbReference type="SMR" id="P0AF07"/>
<dbReference type="STRING" id="155864.Z2943"/>
<dbReference type="GeneID" id="75171962"/>
<dbReference type="GeneID" id="912569"/>
<dbReference type="KEGG" id="ece:Z2943"/>
<dbReference type="KEGG" id="ecs:ECs_2599"/>
<dbReference type="PATRIC" id="fig|386585.9.peg.2725"/>
<dbReference type="eggNOG" id="COG1360">
    <property type="taxonomic scope" value="Bacteria"/>
</dbReference>
<dbReference type="HOGENOM" id="CLU_016890_3_0_6"/>
<dbReference type="OMA" id="DEKNRPM"/>
<dbReference type="Proteomes" id="UP000000558">
    <property type="component" value="Chromosome"/>
</dbReference>
<dbReference type="Proteomes" id="UP000002519">
    <property type="component" value="Chromosome"/>
</dbReference>
<dbReference type="GO" id="GO:0005886">
    <property type="term" value="C:plasma membrane"/>
    <property type="evidence" value="ECO:0007669"/>
    <property type="project" value="UniProtKB-SubCell"/>
</dbReference>
<dbReference type="GO" id="GO:0097588">
    <property type="term" value="P:archaeal or bacterial-type flagellum-dependent cell motility"/>
    <property type="evidence" value="ECO:0007669"/>
    <property type="project" value="UniProtKB-KW"/>
</dbReference>
<dbReference type="GO" id="GO:0006935">
    <property type="term" value="P:chemotaxis"/>
    <property type="evidence" value="ECO:0007669"/>
    <property type="project" value="UniProtKB-KW"/>
</dbReference>
<dbReference type="CDD" id="cd07185">
    <property type="entry name" value="OmpA_C-like"/>
    <property type="match status" value="1"/>
</dbReference>
<dbReference type="FunFam" id="3.30.1330.60:FF:000003">
    <property type="entry name" value="Flagellar motor protein MotB"/>
    <property type="match status" value="1"/>
</dbReference>
<dbReference type="Gene3D" id="3.30.1330.60">
    <property type="entry name" value="OmpA-like domain"/>
    <property type="match status" value="1"/>
</dbReference>
<dbReference type="InterPro" id="IPR050330">
    <property type="entry name" value="Bact_OuterMem_StrucFunc"/>
</dbReference>
<dbReference type="InterPro" id="IPR025713">
    <property type="entry name" value="MotB-like_N_dom"/>
</dbReference>
<dbReference type="InterPro" id="IPR006665">
    <property type="entry name" value="OmpA-like"/>
</dbReference>
<dbReference type="InterPro" id="IPR036737">
    <property type="entry name" value="OmpA-like_sf"/>
</dbReference>
<dbReference type="NCBIfam" id="NF006548">
    <property type="entry name" value="PRK09041.1"/>
    <property type="match status" value="1"/>
</dbReference>
<dbReference type="PANTHER" id="PTHR30329:SF18">
    <property type="entry name" value="MOTILITY PROTEIN B"/>
    <property type="match status" value="1"/>
</dbReference>
<dbReference type="PANTHER" id="PTHR30329">
    <property type="entry name" value="STATOR ELEMENT OF FLAGELLAR MOTOR COMPLEX"/>
    <property type="match status" value="1"/>
</dbReference>
<dbReference type="Pfam" id="PF13677">
    <property type="entry name" value="MotB_plug"/>
    <property type="match status" value="1"/>
</dbReference>
<dbReference type="Pfam" id="PF00691">
    <property type="entry name" value="OmpA"/>
    <property type="match status" value="1"/>
</dbReference>
<dbReference type="SUPFAM" id="SSF103088">
    <property type="entry name" value="OmpA-like"/>
    <property type="match status" value="1"/>
</dbReference>
<dbReference type="PROSITE" id="PS51123">
    <property type="entry name" value="OMPA_2"/>
    <property type="match status" value="1"/>
</dbReference>
<name>MOTB_ECO57</name>
<evidence type="ECO:0000250" key="1"/>
<evidence type="ECO:0000255" key="2"/>
<evidence type="ECO:0000255" key="3">
    <source>
        <dbReference type="PROSITE-ProRule" id="PRU00473"/>
    </source>
</evidence>
<evidence type="ECO:0000256" key="4">
    <source>
        <dbReference type="SAM" id="MobiDB-lite"/>
    </source>
</evidence>
<evidence type="ECO:0000305" key="5"/>
<proteinExistence type="inferred from homology"/>
<gene>
    <name type="primary">motB</name>
    <name type="ordered locus">Z2943</name>
    <name type="ordered locus">ECs2599</name>
</gene>